<reference key="1">
    <citation type="submission" date="2005-03" db="EMBL/GenBank/DDBJ databases">
        <title>Annotation of the Saccharomyces cerevisiae RM11-1a genome.</title>
        <authorList>
            <consortium name="The Broad Institute Genome Sequencing Platform"/>
            <person name="Birren B.W."/>
            <person name="Lander E.S."/>
            <person name="Galagan J.E."/>
            <person name="Nusbaum C."/>
            <person name="Devon K."/>
            <person name="Cuomo C."/>
            <person name="Jaffe D.B."/>
            <person name="Butler J."/>
            <person name="Alvarez P."/>
            <person name="Gnerre S."/>
            <person name="Grabherr M."/>
            <person name="Kleber M."/>
            <person name="Mauceli E.W."/>
            <person name="Brockman W."/>
            <person name="MacCallum I.A."/>
            <person name="Rounsley S."/>
            <person name="Young S.K."/>
            <person name="LaButti K."/>
            <person name="Pushparaj V."/>
            <person name="DeCaprio D."/>
            <person name="Crawford M."/>
            <person name="Koehrsen M."/>
            <person name="Engels R."/>
            <person name="Montgomery P."/>
            <person name="Pearson M."/>
            <person name="Howarth C."/>
            <person name="Larson L."/>
            <person name="Luoma S."/>
            <person name="White J."/>
            <person name="O'Leary S."/>
            <person name="Kodira C.D."/>
            <person name="Zeng Q."/>
            <person name="Yandava C."/>
            <person name="Alvarado L."/>
            <person name="Pratt S."/>
            <person name="Kruglyak L."/>
        </authorList>
    </citation>
    <scope>NUCLEOTIDE SEQUENCE [LARGE SCALE GENOMIC DNA]</scope>
    <source>
        <strain>RM11-1a</strain>
    </source>
</reference>
<dbReference type="EMBL" id="CH408045">
    <property type="protein sequence ID" value="EDV10482.1"/>
    <property type="molecule type" value="Genomic_DNA"/>
</dbReference>
<dbReference type="SMR" id="B3LIS9"/>
<dbReference type="HOGENOM" id="CLU_008512_0_0_1"/>
<dbReference type="OrthoDB" id="37178at4893"/>
<dbReference type="Proteomes" id="UP000008335">
    <property type="component" value="Unassembled WGS sequence"/>
</dbReference>
<dbReference type="GO" id="GO:0005829">
    <property type="term" value="C:cytosol"/>
    <property type="evidence" value="ECO:0007669"/>
    <property type="project" value="TreeGrafter"/>
</dbReference>
<dbReference type="GO" id="GO:0061700">
    <property type="term" value="C:GATOR2 complex"/>
    <property type="evidence" value="ECO:0007669"/>
    <property type="project" value="TreeGrafter"/>
</dbReference>
<dbReference type="GO" id="GO:0005774">
    <property type="term" value="C:vacuolar membrane"/>
    <property type="evidence" value="ECO:0007669"/>
    <property type="project" value="TreeGrafter"/>
</dbReference>
<dbReference type="GO" id="GO:0008270">
    <property type="term" value="F:zinc ion binding"/>
    <property type="evidence" value="ECO:0007669"/>
    <property type="project" value="UniProtKB-KW"/>
</dbReference>
<dbReference type="GO" id="GO:0016239">
    <property type="term" value="P:positive regulation of macroautophagy"/>
    <property type="evidence" value="ECO:0007669"/>
    <property type="project" value="TreeGrafter"/>
</dbReference>
<dbReference type="GO" id="GO:1904263">
    <property type="term" value="P:positive regulation of TORC1 signaling"/>
    <property type="evidence" value="ECO:0007669"/>
    <property type="project" value="TreeGrafter"/>
</dbReference>
<dbReference type="CDD" id="cd16488">
    <property type="entry name" value="mRING-H2-C3H3C2_Mio-like"/>
    <property type="match status" value="1"/>
</dbReference>
<dbReference type="FunFam" id="2.130.10.10:FF:001334">
    <property type="entry name" value="Restriction of telomere capping protein 1"/>
    <property type="match status" value="1"/>
</dbReference>
<dbReference type="Gene3D" id="2.130.10.10">
    <property type="entry name" value="YVTN repeat-like/Quinoprotein amine dehydrogenase"/>
    <property type="match status" value="2"/>
</dbReference>
<dbReference type="Gene3D" id="3.30.40.10">
    <property type="entry name" value="Zinc/RING finger domain, C3HC4 (zinc finger)"/>
    <property type="match status" value="1"/>
</dbReference>
<dbReference type="InterPro" id="IPR015943">
    <property type="entry name" value="WD40/YVTN_repeat-like_dom_sf"/>
</dbReference>
<dbReference type="InterPro" id="IPR019775">
    <property type="entry name" value="WD40_repeat_CS"/>
</dbReference>
<dbReference type="InterPro" id="IPR036322">
    <property type="entry name" value="WD40_repeat_dom_sf"/>
</dbReference>
<dbReference type="InterPro" id="IPR001680">
    <property type="entry name" value="WD40_rpt"/>
</dbReference>
<dbReference type="InterPro" id="IPR037590">
    <property type="entry name" value="WDR24"/>
</dbReference>
<dbReference type="InterPro" id="IPR049566">
    <property type="entry name" value="WDR59_RTC1-like_RING_Znf"/>
</dbReference>
<dbReference type="InterPro" id="IPR001841">
    <property type="entry name" value="Znf_RING"/>
</dbReference>
<dbReference type="InterPro" id="IPR013083">
    <property type="entry name" value="Znf_RING/FYVE/PHD"/>
</dbReference>
<dbReference type="PANTHER" id="PTHR46200">
    <property type="entry name" value="GATOR COMPLEX PROTEIN WDR24"/>
    <property type="match status" value="1"/>
</dbReference>
<dbReference type="PANTHER" id="PTHR46200:SF1">
    <property type="entry name" value="GATOR COMPLEX PROTEIN WDR24"/>
    <property type="match status" value="1"/>
</dbReference>
<dbReference type="Pfam" id="PF00400">
    <property type="entry name" value="WD40"/>
    <property type="match status" value="2"/>
</dbReference>
<dbReference type="Pfam" id="PF17120">
    <property type="entry name" value="zf-RING_16"/>
    <property type="match status" value="1"/>
</dbReference>
<dbReference type="SMART" id="SM00320">
    <property type="entry name" value="WD40"/>
    <property type="match status" value="2"/>
</dbReference>
<dbReference type="SUPFAM" id="SSF57850">
    <property type="entry name" value="RING/U-box"/>
    <property type="match status" value="1"/>
</dbReference>
<dbReference type="SUPFAM" id="SSF50978">
    <property type="entry name" value="WD40 repeat-like"/>
    <property type="match status" value="1"/>
</dbReference>
<dbReference type="PROSITE" id="PS00678">
    <property type="entry name" value="WD_REPEATS_1"/>
    <property type="match status" value="1"/>
</dbReference>
<dbReference type="PROSITE" id="PS50082">
    <property type="entry name" value="WD_REPEATS_2"/>
    <property type="match status" value="2"/>
</dbReference>
<dbReference type="PROSITE" id="PS50294">
    <property type="entry name" value="WD_REPEATS_REGION"/>
    <property type="match status" value="2"/>
</dbReference>
<dbReference type="PROSITE" id="PS50089">
    <property type="entry name" value="ZF_RING_2"/>
    <property type="match status" value="1"/>
</dbReference>
<protein>
    <recommendedName>
        <fullName>Restriction of telomere capping protein 1</fullName>
    </recommendedName>
</protein>
<comment type="function">
    <text evidence="1">May be involved in a process influencing telomere capping.</text>
</comment>
<comment type="subcellular location">
    <subcellularLocation>
        <location evidence="1">Vacuole</location>
    </subcellularLocation>
</comment>
<comment type="similarity">
    <text evidence="5">Belongs to the WD repeat RTC1 family.</text>
</comment>
<gene>
    <name type="primary">RTC1</name>
    <name type="ORF">SCRG_01269</name>
</gene>
<organism>
    <name type="scientific">Saccharomyces cerevisiae (strain RM11-1a)</name>
    <name type="common">Baker's yeast</name>
    <dbReference type="NCBI Taxonomy" id="285006"/>
    <lineage>
        <taxon>Eukaryota</taxon>
        <taxon>Fungi</taxon>
        <taxon>Dikarya</taxon>
        <taxon>Ascomycota</taxon>
        <taxon>Saccharomycotina</taxon>
        <taxon>Saccharomycetes</taxon>
        <taxon>Saccharomycetales</taxon>
        <taxon>Saccharomycetaceae</taxon>
        <taxon>Saccharomyces</taxon>
    </lineage>
</organism>
<keyword id="KW-0479">Metal-binding</keyword>
<keyword id="KW-0597">Phosphoprotein</keyword>
<keyword id="KW-0677">Repeat</keyword>
<keyword id="KW-0926">Vacuole</keyword>
<keyword id="KW-0853">WD repeat</keyword>
<keyword id="KW-0862">Zinc</keyword>
<keyword id="KW-0863">Zinc-finger</keyword>
<sequence>MSLSPHVENASIPKGSTPIPKNRNVSSIGKGEFLGSSSSNNSSFRMNHYSNSGQPSVLDSIRRPNLTPTFSYSNGVYMPESHRTSSFNDSYLPYDKNPYAKTTGSMSNKSNMKIKTKKNAINTNTRKSSGLIYTTKVDKELSSIDKVNDPNINGLVCAGKTHLGLYKFSPSDRSIKCVHDFITPNSNTSTRGTTSLLPKLSKRTRQNKFSTIADVKTGFNNYKNCIAVCNNSTAISIYDLNKSSSIDNPLITSLCEHTRSINSFDFNMVESNLIISGGQDSCVKIWDLRSNKSKSSNRSDISINTASDSIRDVKWMPGYNFASKNDQGSSTYGNLKSGYKFASIHDSGYLLKFDLRQPAQYEKKLNAHTGPGLCLNWHPNQEYIATGGRDGKCCLWFVGDNANAAENTVLNYGNSPSLHVPNTSLNNSGSLAFPKLTINTDYPVTKLKFKPAYSSNIYNSLLGISSMGDEAEVRIYSLARKYIPKHVLLSETPSLGLVWWDENLIFNIDKGTRINGWDINKEPTVLENLSKNTTTWRDLDGNGLLSVDQEIGSYEVVEPELQPTSSTTCKKHPGTIKNPKNGNPENQGIIGGIKKGFSHTGLTSFTPERPPTLKAGPTFSTKSLTLASGASSFNSSSASLTSLTPQTENREEIAIEPPCIITLDIPQIFNNIRLTKIAHSRKKNVISESSSMKNSPVEKFKYLARQLKFSYIREHNVSDSADTAYKNDIENIDVVKNATETHGDNTTTTNNNDDGDDDDDDDDDDDKIIESHLLKKYNFPENNTWATLMNEKVNNKKSKRNSSSSREFDEKDVRSSISSISASRQSHDRSRKIDKNVEAELQEKIQTLVDLISIATHNASVYLSIDDLTNFKIWILIRDSLLWDLKWMTSSQISSDNASNMDANESSDFEAGENLKTGKEFPEEDGAGTSGAESLVEERPQAFRANSDEPSDAEKKPVSKLKEQLKNTEIIPYAQPNEDSDEVLTKLKELQNQRLESRTKMGETVSDDVIIEEDEHEHQEEEQPHDSPTKSAQFHASPIAKSIPILQKREHRKSFIDTFMLHSPNGYNGDTDIGNEDDNISPRFTYNSVSPRSKVSSLQSYATTTSQLETFKKLSSHTAPIIGSPRHAPSRPDSIGREQLSSSLTKKLAKCKKIIADPPWDTKKLIKQLYNQATETGNVVLTVNILFLFQTIYQITEIDIAKDAIAHFLLLLHRYELFGIAADVLKYCPFEDIMGSEGDQSSIRLFCERCGELITNESSKEKLRAEAQQTGNKKIMDKFGYWYCDSCKKKNTSCVLCERPLKKLTMVILPCGHEGHFQCIQEWFLDENEQECPGGCPGVAFI</sequence>
<name>RTC1_YEAS1</name>
<accession>B3LIS9</accession>
<proteinExistence type="inferred from homology"/>
<feature type="chain" id="PRO_0000408789" description="Restriction of telomere capping protein 1">
    <location>
        <begin position="1"/>
        <end position="1342"/>
    </location>
</feature>
<feature type="repeat" description="WD 1">
    <location>
        <begin position="207"/>
        <end position="248"/>
    </location>
</feature>
<feature type="repeat" description="WD 2">
    <location>
        <begin position="256"/>
        <end position="296"/>
    </location>
</feature>
<feature type="repeat" description="WD 3">
    <location>
        <begin position="305"/>
        <end position="342"/>
    </location>
</feature>
<feature type="repeat" description="WD 4">
    <location>
        <begin position="367"/>
        <end position="406"/>
    </location>
</feature>
<feature type="repeat" description="WD 5">
    <location>
        <begin position="439"/>
        <end position="486"/>
    </location>
</feature>
<feature type="repeat" description="WD 6">
    <location>
        <begin position="489"/>
        <end position="527"/>
    </location>
</feature>
<feature type="repeat" description="WD 7">
    <location>
        <begin position="844"/>
        <end position="884"/>
    </location>
</feature>
<feature type="repeat" description="WD 8">
    <location>
        <begin position="1130"/>
        <end position="1170"/>
    </location>
</feature>
<feature type="repeat" description="WD 9">
    <location>
        <begin position="1217"/>
        <end position="1256"/>
    </location>
</feature>
<feature type="zinc finger region" description="RING-type; degenerate" evidence="3">
    <location>
        <begin position="1294"/>
        <end position="1336"/>
    </location>
</feature>
<feature type="region of interest" description="Disordered" evidence="4">
    <location>
        <begin position="1"/>
        <end position="39"/>
    </location>
</feature>
<feature type="region of interest" description="Disordered" evidence="4">
    <location>
        <begin position="559"/>
        <end position="593"/>
    </location>
</feature>
<feature type="region of interest" description="Disordered" evidence="4">
    <location>
        <begin position="600"/>
        <end position="619"/>
    </location>
</feature>
<feature type="region of interest" description="Disordered" evidence="4">
    <location>
        <begin position="630"/>
        <end position="651"/>
    </location>
</feature>
<feature type="region of interest" description="Disordered" evidence="4">
    <location>
        <begin position="736"/>
        <end position="766"/>
    </location>
</feature>
<feature type="region of interest" description="Disordered" evidence="4">
    <location>
        <begin position="788"/>
        <end position="831"/>
    </location>
</feature>
<feature type="region of interest" description="Disordered" evidence="4">
    <location>
        <begin position="942"/>
        <end position="963"/>
    </location>
</feature>
<feature type="region of interest" description="Disordered" evidence="4">
    <location>
        <begin position="1014"/>
        <end position="1047"/>
    </location>
</feature>
<feature type="compositionally biased region" description="Low complexity" evidence="4">
    <location>
        <begin position="630"/>
        <end position="644"/>
    </location>
</feature>
<feature type="compositionally biased region" description="Acidic residues" evidence="4">
    <location>
        <begin position="753"/>
        <end position="766"/>
    </location>
</feature>
<feature type="compositionally biased region" description="Low complexity" evidence="4">
    <location>
        <begin position="815"/>
        <end position="824"/>
    </location>
</feature>
<feature type="compositionally biased region" description="Basic and acidic residues" evidence="4">
    <location>
        <begin position="952"/>
        <end position="963"/>
    </location>
</feature>
<feature type="compositionally biased region" description="Basic and acidic residues" evidence="4">
    <location>
        <begin position="1016"/>
        <end position="1028"/>
    </location>
</feature>
<feature type="modified residue" description="Phosphoserine" evidence="2">
    <location>
        <position position="1037"/>
    </location>
</feature>
<feature type="modified residue" description="Phosphoserine" evidence="2">
    <location>
        <position position="1081"/>
    </location>
</feature>
<feature type="modified residue" description="Phosphoserine" evidence="2">
    <location>
        <position position="1088"/>
    </location>
</feature>
<feature type="modified residue" description="Phosphoserine" evidence="2">
    <location>
        <position position="1090"/>
    </location>
</feature>
<feature type="modified residue" description="Phosphoserine" evidence="2">
    <location>
        <position position="1124"/>
    </location>
</feature>
<feature type="modified residue" description="Phosphoserine" evidence="2">
    <location>
        <position position="1134"/>
    </location>
</feature>
<evidence type="ECO:0000250" key="1"/>
<evidence type="ECO:0000250" key="2">
    <source>
        <dbReference type="UniProtKB" id="Q08281"/>
    </source>
</evidence>
<evidence type="ECO:0000255" key="3">
    <source>
        <dbReference type="PROSITE-ProRule" id="PRU00175"/>
    </source>
</evidence>
<evidence type="ECO:0000256" key="4">
    <source>
        <dbReference type="SAM" id="MobiDB-lite"/>
    </source>
</evidence>
<evidence type="ECO:0000305" key="5"/>